<protein>
    <recommendedName>
        <fullName>Caffeoyl-CoA O-methyltransferase 2</fullName>
        <ecNumber>2.1.1.104</ecNumber>
    </recommendedName>
    <alternativeName>
        <fullName>Trans-caffeoyl-CoA 3-O-methyltransferase 2</fullName>
        <shortName>CCoAMT-2</shortName>
        <shortName>CCoAOMT-2</shortName>
    </alternativeName>
</protein>
<comment type="function">
    <text>Methylates caffeoyl-CoA to feruloyl-CoA and 5-hydroxyferuloyl-CoA to sinapoyl-CoA. Plays a role in the synthesis of feruloylated polysaccharides. Involved in the reinforcement of the plant cell wall. Also involved in the responding to wounding or pathogen challenge by the increased formation of cell wall-bound ferulic acid polymers.</text>
</comment>
<comment type="catalytic activity">
    <reaction>
        <text>(E)-caffeoyl-CoA + S-adenosyl-L-methionine = (E)-feruloyl-CoA + S-adenosyl-L-homocysteine + H(+)</text>
        <dbReference type="Rhea" id="RHEA:16925"/>
        <dbReference type="ChEBI" id="CHEBI:15378"/>
        <dbReference type="ChEBI" id="CHEBI:57856"/>
        <dbReference type="ChEBI" id="CHEBI:59789"/>
        <dbReference type="ChEBI" id="CHEBI:87136"/>
        <dbReference type="ChEBI" id="CHEBI:87305"/>
        <dbReference type="EC" id="2.1.1.104"/>
    </reaction>
</comment>
<comment type="cofactor">
    <cofactor evidence="1">
        <name>a divalent metal cation</name>
        <dbReference type="ChEBI" id="CHEBI:60240"/>
    </cofactor>
    <text evidence="1">Binds 1 divalent metal cation per subunit.</text>
</comment>
<comment type="pathway">
    <text>Aromatic compound metabolism; phenylpropanoid biosynthesis.</text>
</comment>
<comment type="similarity">
    <text evidence="2">Belongs to the class I-like SAM-binding methyltransferase superfamily. Cation-dependent O-methyltransferase family. CCoAMT subfamily.</text>
</comment>
<name>CAMT2_POPTR</name>
<reference key="1">
    <citation type="journal article" date="2000" name="J. Biol. Chem.">
        <title>Modifications in lignin and accumulation of phenolic glucosides in poplar xylem upon down-regulation of caffeoyl-coenzyme A O-methyltransferase, an enzyme involved in lignin biosynthesis.</title>
        <authorList>
            <person name="Meyermans H."/>
            <person name="Morreel K."/>
            <person name="Lapierre C."/>
            <person name="Pollet B."/>
            <person name="De Bruyn A."/>
            <person name="Busson R."/>
            <person name="Herdewijn P."/>
            <person name="Devreese B."/>
            <person name="Van Beeumen J."/>
            <person name="Marita J.M."/>
            <person name="Ralph J."/>
            <person name="Chen C."/>
            <person name="Burggraeve B."/>
            <person name="Van Montagu M."/>
            <person name="Messens E."/>
            <person name="Boerjan W."/>
        </authorList>
    </citation>
    <scope>NUCLEOTIDE SEQUENCE</scope>
    <source>
        <strain>cv. Trichobel</strain>
        <tissue>Xylem</tissue>
    </source>
</reference>
<reference key="2">
    <citation type="online journal article" date="1999" name="Plant Gene Register">
        <title>A poplar gene for caffeoyl-coenzyme A 3-O-methyltransferase.</title>
        <authorList>
            <person name="Chen C."/>
            <person name="Ardiles-Diaz W."/>
            <person name="van Montagu M."/>
            <person name="Boerjan W."/>
        </authorList>
        <locator>PGR99-085</locator>
    </citation>
    <scope>NUCLEOTIDE SEQUENCE</scope>
    <source>
        <strain>cv. Trichobel</strain>
        <tissue>Leaf</tissue>
    </source>
</reference>
<dbReference type="EC" id="2.1.1.104"/>
<dbReference type="EMBL" id="AJ224895">
    <property type="protein sequence ID" value="CAA12199.1"/>
    <property type="molecule type" value="mRNA"/>
</dbReference>
<dbReference type="EMBL" id="AJ224896">
    <property type="protein sequence ID" value="CAA12200.1"/>
    <property type="molecule type" value="mRNA"/>
</dbReference>
<dbReference type="EMBL" id="AJ223620">
    <property type="protein sequence ID" value="CAA11495.1"/>
    <property type="molecule type" value="Genomic_DNA"/>
</dbReference>
<dbReference type="RefSeq" id="XP_002298729.1">
    <property type="nucleotide sequence ID" value="XM_002298693.2"/>
</dbReference>
<dbReference type="SMR" id="O65922"/>
<dbReference type="EnsemblPlants" id="Potri.001G304800.1.v4.1">
    <property type="protein sequence ID" value="Potri.001G304800.1.v4.1"/>
    <property type="gene ID" value="Potri.001G304800.v4.1"/>
</dbReference>
<dbReference type="Gramene" id="Potri.001G304800.1.v4.1">
    <property type="protein sequence ID" value="Potri.001G304800.1.v4.1"/>
    <property type="gene ID" value="Potri.001G304800.v4.1"/>
</dbReference>
<dbReference type="eggNOG" id="KOG1663">
    <property type="taxonomic scope" value="Eukaryota"/>
</dbReference>
<dbReference type="HOGENOM" id="CLU_067676_5_0_1"/>
<dbReference type="OMA" id="MEIGIYH"/>
<dbReference type="OrthoDB" id="10251242at2759"/>
<dbReference type="BRENDA" id="2.1.1.104">
    <property type="organism ID" value="4982"/>
</dbReference>
<dbReference type="UniPathway" id="UPA00711"/>
<dbReference type="ExpressionAtlas" id="O65922">
    <property type="expression patterns" value="baseline and differential"/>
</dbReference>
<dbReference type="GO" id="GO:0042409">
    <property type="term" value="F:caffeoyl-CoA O-methyltransferase activity"/>
    <property type="evidence" value="ECO:0007669"/>
    <property type="project" value="UniProtKB-EC"/>
</dbReference>
<dbReference type="GO" id="GO:0046872">
    <property type="term" value="F:metal ion binding"/>
    <property type="evidence" value="ECO:0007669"/>
    <property type="project" value="UniProtKB-KW"/>
</dbReference>
<dbReference type="GO" id="GO:0009809">
    <property type="term" value="P:lignin biosynthetic process"/>
    <property type="evidence" value="ECO:0007669"/>
    <property type="project" value="UniProtKB-KW"/>
</dbReference>
<dbReference type="GO" id="GO:0032259">
    <property type="term" value="P:methylation"/>
    <property type="evidence" value="ECO:0007669"/>
    <property type="project" value="UniProtKB-KW"/>
</dbReference>
<dbReference type="CDD" id="cd02440">
    <property type="entry name" value="AdoMet_MTases"/>
    <property type="match status" value="1"/>
</dbReference>
<dbReference type="FunFam" id="3.40.50.150:FF:000147">
    <property type="entry name" value="Caffeoyl-CoA O-methyltransferase 1"/>
    <property type="match status" value="1"/>
</dbReference>
<dbReference type="Gene3D" id="3.40.50.150">
    <property type="entry name" value="Vaccinia Virus protein VP39"/>
    <property type="match status" value="1"/>
</dbReference>
<dbReference type="InterPro" id="IPR050362">
    <property type="entry name" value="Cation-dep_OMT"/>
</dbReference>
<dbReference type="InterPro" id="IPR029063">
    <property type="entry name" value="SAM-dependent_MTases_sf"/>
</dbReference>
<dbReference type="InterPro" id="IPR002935">
    <property type="entry name" value="SAM_O-MeTrfase"/>
</dbReference>
<dbReference type="PANTHER" id="PTHR10509:SF74">
    <property type="entry name" value="CAFFEOYL-COA O-METHYLTRANSFERASE 2"/>
    <property type="match status" value="1"/>
</dbReference>
<dbReference type="PANTHER" id="PTHR10509">
    <property type="entry name" value="O-METHYLTRANSFERASE-RELATED"/>
    <property type="match status" value="1"/>
</dbReference>
<dbReference type="Pfam" id="PF01596">
    <property type="entry name" value="Methyltransf_3"/>
    <property type="match status" value="1"/>
</dbReference>
<dbReference type="SUPFAM" id="SSF53335">
    <property type="entry name" value="S-adenosyl-L-methionine-dependent methyltransferases"/>
    <property type="match status" value="1"/>
</dbReference>
<dbReference type="PROSITE" id="PS51682">
    <property type="entry name" value="SAM_OMT_I"/>
    <property type="match status" value="1"/>
</dbReference>
<sequence>MAANGEEQQTQAGRHQEVGHKSLLQSDALYQYILETSVYPREPECMKELRELTAKHPWNIMTTSADEGQFLNMLLKLINAKNTMEIGVFTGYSLLATALAIPEDGKILAMDINRENYELGLPVIQKAGLEHKIEFKEGPALPVLDQMIEDGKYHGTYDFIFVDADKDNYINYHKRLIELVKVGGLIGYDNTLWNGSVVAPADAPMRKYVRYYRDFVLELNKALAADPRIEICMLPVGDGITLCRRIK</sequence>
<feature type="chain" id="PRO_0000165694" description="Caffeoyl-CoA O-methyltransferase 2">
    <location>
        <begin position="1"/>
        <end position="247"/>
    </location>
</feature>
<feature type="binding site" evidence="1">
    <location>
        <position position="21"/>
    </location>
    <ligand>
        <name>substrate</name>
    </ligand>
</feature>
<feature type="binding site" evidence="2">
    <location>
        <position position="63"/>
    </location>
    <ligand>
        <name>S-adenosyl-L-methionine</name>
        <dbReference type="ChEBI" id="CHEBI:59789"/>
    </ligand>
</feature>
<feature type="binding site" evidence="2">
    <location>
        <position position="85"/>
    </location>
    <ligand>
        <name>S-adenosyl-L-methionine</name>
        <dbReference type="ChEBI" id="CHEBI:59789"/>
    </ligand>
</feature>
<feature type="binding site" evidence="2">
    <location>
        <begin position="87"/>
        <end position="88"/>
    </location>
    <ligand>
        <name>S-adenosyl-L-methionine</name>
        <dbReference type="ChEBI" id="CHEBI:59789"/>
    </ligand>
</feature>
<feature type="binding site" evidence="2">
    <location>
        <position position="93"/>
    </location>
    <ligand>
        <name>S-adenosyl-L-methionine</name>
        <dbReference type="ChEBI" id="CHEBI:59789"/>
    </ligand>
</feature>
<feature type="binding site" evidence="2">
    <location>
        <position position="111"/>
    </location>
    <ligand>
        <name>S-adenosyl-L-methionine</name>
        <dbReference type="ChEBI" id="CHEBI:59789"/>
    </ligand>
</feature>
<feature type="binding site" evidence="2">
    <location>
        <position position="140"/>
    </location>
    <ligand>
        <name>S-adenosyl-L-methionine</name>
        <dbReference type="ChEBI" id="CHEBI:59789"/>
    </ligand>
</feature>
<feature type="binding site" evidence="2">
    <location>
        <position position="163"/>
    </location>
    <ligand>
        <name>a divalent metal cation</name>
        <dbReference type="ChEBI" id="CHEBI:60240"/>
    </ligand>
</feature>
<feature type="binding site" evidence="1">
    <location>
        <position position="163"/>
    </location>
    <ligand>
        <name>substrate</name>
    </ligand>
</feature>
<feature type="binding site" evidence="2">
    <location>
        <position position="165"/>
    </location>
    <ligand>
        <name>S-adenosyl-L-methionine</name>
        <dbReference type="ChEBI" id="CHEBI:59789"/>
    </ligand>
</feature>
<feature type="binding site" evidence="2">
    <location>
        <position position="189"/>
    </location>
    <ligand>
        <name>a divalent metal cation</name>
        <dbReference type="ChEBI" id="CHEBI:60240"/>
    </ligand>
</feature>
<feature type="binding site" evidence="2">
    <location>
        <position position="190"/>
    </location>
    <ligand>
        <name>a divalent metal cation</name>
        <dbReference type="ChEBI" id="CHEBI:60240"/>
    </ligand>
</feature>
<feature type="binding site" evidence="1">
    <location>
        <position position="194"/>
    </location>
    <ligand>
        <name>substrate</name>
    </ligand>
</feature>
<keyword id="KW-0438">Lignin biosynthesis</keyword>
<keyword id="KW-0479">Metal-binding</keyword>
<keyword id="KW-0489">Methyltransferase</keyword>
<keyword id="KW-0949">S-adenosyl-L-methionine</keyword>
<keyword id="KW-0808">Transferase</keyword>
<evidence type="ECO:0000250" key="1">
    <source>
        <dbReference type="UniProtKB" id="Q40313"/>
    </source>
</evidence>
<evidence type="ECO:0000255" key="2">
    <source>
        <dbReference type="PROSITE-ProRule" id="PRU01019"/>
    </source>
</evidence>
<proteinExistence type="evidence at transcript level"/>
<accession>O65922</accession>
<organism>
    <name type="scientific">Populus trichocarpa</name>
    <name type="common">Western balsam poplar</name>
    <name type="synonym">Populus balsamifera subsp. trichocarpa</name>
    <dbReference type="NCBI Taxonomy" id="3694"/>
    <lineage>
        <taxon>Eukaryota</taxon>
        <taxon>Viridiplantae</taxon>
        <taxon>Streptophyta</taxon>
        <taxon>Embryophyta</taxon>
        <taxon>Tracheophyta</taxon>
        <taxon>Spermatophyta</taxon>
        <taxon>Magnoliopsida</taxon>
        <taxon>eudicotyledons</taxon>
        <taxon>Gunneridae</taxon>
        <taxon>Pentapetalae</taxon>
        <taxon>rosids</taxon>
        <taxon>fabids</taxon>
        <taxon>Malpighiales</taxon>
        <taxon>Salicaceae</taxon>
        <taxon>Saliceae</taxon>
        <taxon>Populus</taxon>
    </lineage>
</organism>
<gene>
    <name type="primary">CCOAOMT2</name>
</gene>